<feature type="chain" id="PRO_5000004211" description="UPF0391 membrane protein Acid_3618">
    <location>
        <begin position="1"/>
        <end position="53"/>
    </location>
</feature>
<feature type="transmembrane region" description="Helical" evidence="1">
    <location>
        <begin position="6"/>
        <end position="26"/>
    </location>
</feature>
<feature type="transmembrane region" description="Helical" evidence="1">
    <location>
        <begin position="28"/>
        <end position="48"/>
    </location>
</feature>
<organism>
    <name type="scientific">Solibacter usitatus (strain Ellin6076)</name>
    <dbReference type="NCBI Taxonomy" id="234267"/>
    <lineage>
        <taxon>Bacteria</taxon>
        <taxon>Pseudomonadati</taxon>
        <taxon>Acidobacteriota</taxon>
        <taxon>Terriglobia</taxon>
        <taxon>Bryobacterales</taxon>
        <taxon>Solibacteraceae</taxon>
        <taxon>Candidatus Solibacter</taxon>
    </lineage>
</organism>
<evidence type="ECO:0000255" key="1">
    <source>
        <dbReference type="HAMAP-Rule" id="MF_01361"/>
    </source>
</evidence>
<gene>
    <name type="ordered locus">Acid_3618</name>
</gene>
<sequence>MLHWSLVFLVFALIAAVLGFGGLAGAAVGIAKILFFVFLVIWLVAFLMGRRAI</sequence>
<comment type="subcellular location">
    <subcellularLocation>
        <location evidence="1">Cell membrane</location>
        <topology evidence="1">Multi-pass membrane protein</topology>
    </subcellularLocation>
</comment>
<comment type="similarity">
    <text evidence="1">Belongs to the UPF0391 family.</text>
</comment>
<reference key="1">
    <citation type="journal article" date="2009" name="Appl. Environ. Microbiol.">
        <title>Three genomes from the phylum Acidobacteria provide insight into the lifestyles of these microorganisms in soils.</title>
        <authorList>
            <person name="Ward N.L."/>
            <person name="Challacombe J.F."/>
            <person name="Janssen P.H."/>
            <person name="Henrissat B."/>
            <person name="Coutinho P.M."/>
            <person name="Wu M."/>
            <person name="Xie G."/>
            <person name="Haft D.H."/>
            <person name="Sait M."/>
            <person name="Badger J."/>
            <person name="Barabote R.D."/>
            <person name="Bradley B."/>
            <person name="Brettin T.S."/>
            <person name="Brinkac L.M."/>
            <person name="Bruce D."/>
            <person name="Creasy T."/>
            <person name="Daugherty S.C."/>
            <person name="Davidsen T.M."/>
            <person name="DeBoy R.T."/>
            <person name="Detter J.C."/>
            <person name="Dodson R.J."/>
            <person name="Durkin A.S."/>
            <person name="Ganapathy A."/>
            <person name="Gwinn-Giglio M."/>
            <person name="Han C.S."/>
            <person name="Khouri H."/>
            <person name="Kiss H."/>
            <person name="Kothari S.P."/>
            <person name="Madupu R."/>
            <person name="Nelson K.E."/>
            <person name="Nelson W.C."/>
            <person name="Paulsen I."/>
            <person name="Penn K."/>
            <person name="Ren Q."/>
            <person name="Rosovitz M.J."/>
            <person name="Selengut J.D."/>
            <person name="Shrivastava S."/>
            <person name="Sullivan S.A."/>
            <person name="Tapia R."/>
            <person name="Thompson L.S."/>
            <person name="Watkins K.L."/>
            <person name="Yang Q."/>
            <person name="Yu C."/>
            <person name="Zafar N."/>
            <person name="Zhou L."/>
            <person name="Kuske C.R."/>
        </authorList>
    </citation>
    <scope>NUCLEOTIDE SEQUENCE [LARGE SCALE GENOMIC DNA]</scope>
    <source>
        <strain>Ellin6076</strain>
    </source>
</reference>
<name>Y3618_SOLUE</name>
<protein>
    <recommendedName>
        <fullName evidence="1">UPF0391 membrane protein Acid_3618</fullName>
    </recommendedName>
</protein>
<accession>Q020Q4</accession>
<keyword id="KW-1003">Cell membrane</keyword>
<keyword id="KW-0472">Membrane</keyword>
<keyword id="KW-0812">Transmembrane</keyword>
<keyword id="KW-1133">Transmembrane helix</keyword>
<proteinExistence type="inferred from homology"/>
<dbReference type="EMBL" id="CP000473">
    <property type="protein sequence ID" value="ABJ84590.1"/>
    <property type="molecule type" value="Genomic_DNA"/>
</dbReference>
<dbReference type="FunCoup" id="Q020Q4">
    <property type="interactions" value="4"/>
</dbReference>
<dbReference type="STRING" id="234267.Acid_3618"/>
<dbReference type="KEGG" id="sus:Acid_3618"/>
<dbReference type="eggNOG" id="COG5487">
    <property type="taxonomic scope" value="Bacteria"/>
</dbReference>
<dbReference type="HOGENOM" id="CLU_187346_1_0_0"/>
<dbReference type="InParanoid" id="Q020Q4"/>
<dbReference type="GO" id="GO:0005886">
    <property type="term" value="C:plasma membrane"/>
    <property type="evidence" value="ECO:0007669"/>
    <property type="project" value="UniProtKB-SubCell"/>
</dbReference>
<dbReference type="HAMAP" id="MF_01361">
    <property type="entry name" value="UPF0391"/>
    <property type="match status" value="1"/>
</dbReference>
<dbReference type="InterPro" id="IPR009760">
    <property type="entry name" value="DUF1328"/>
</dbReference>
<dbReference type="NCBIfam" id="NF010226">
    <property type="entry name" value="PRK13682.1-1"/>
    <property type="match status" value="1"/>
</dbReference>
<dbReference type="NCBIfam" id="NF010229">
    <property type="entry name" value="PRK13682.1-4"/>
    <property type="match status" value="1"/>
</dbReference>
<dbReference type="Pfam" id="PF07043">
    <property type="entry name" value="DUF1328"/>
    <property type="match status" value="1"/>
</dbReference>
<dbReference type="PIRSF" id="PIRSF036466">
    <property type="entry name" value="UCP036466"/>
    <property type="match status" value="1"/>
</dbReference>